<proteinExistence type="inferred from homology"/>
<evidence type="ECO:0000255" key="1">
    <source>
        <dbReference type="HAMAP-Rule" id="MF_01369"/>
    </source>
</evidence>
<evidence type="ECO:0000305" key="2"/>
<keyword id="KW-1185">Reference proteome</keyword>
<keyword id="KW-0687">Ribonucleoprotein</keyword>
<keyword id="KW-0689">Ribosomal protein</keyword>
<keyword id="KW-0694">RNA-binding</keyword>
<keyword id="KW-0699">rRNA-binding</keyword>
<feature type="chain" id="PRO_1000068067" description="Large ribosomal subunit protein uL23">
    <location>
        <begin position="1"/>
        <end position="96"/>
    </location>
</feature>
<name>RL23_CLONN</name>
<sequence>MLNSYDLIRRPVITEKSMAAMADRQYTFIVDIRADKTQIKKAVEKVFGVKVEEVRTARFDGKVKRVGVHVGKRSDYKKAMVKLTEDSKTIEFFEGM</sequence>
<organism>
    <name type="scientific">Clostridium novyi (strain NT)</name>
    <dbReference type="NCBI Taxonomy" id="386415"/>
    <lineage>
        <taxon>Bacteria</taxon>
        <taxon>Bacillati</taxon>
        <taxon>Bacillota</taxon>
        <taxon>Clostridia</taxon>
        <taxon>Eubacteriales</taxon>
        <taxon>Clostridiaceae</taxon>
        <taxon>Clostridium</taxon>
    </lineage>
</organism>
<protein>
    <recommendedName>
        <fullName evidence="1">Large ribosomal subunit protein uL23</fullName>
    </recommendedName>
    <alternativeName>
        <fullName evidence="2">50S ribosomal protein L23</fullName>
    </alternativeName>
</protein>
<reference key="1">
    <citation type="journal article" date="2006" name="Nat. Biotechnol.">
        <title>The genome and transcriptomes of the anti-tumor agent Clostridium novyi-NT.</title>
        <authorList>
            <person name="Bettegowda C."/>
            <person name="Huang X."/>
            <person name="Lin J."/>
            <person name="Cheong I."/>
            <person name="Kohli M."/>
            <person name="Szabo S.A."/>
            <person name="Zhang X."/>
            <person name="Diaz L.A. Jr."/>
            <person name="Velculescu V.E."/>
            <person name="Parmigiani G."/>
            <person name="Kinzler K.W."/>
            <person name="Vogelstein B."/>
            <person name="Zhou S."/>
        </authorList>
    </citation>
    <scope>NUCLEOTIDE SEQUENCE [LARGE SCALE GENOMIC DNA]</scope>
    <source>
        <strain>NT</strain>
    </source>
</reference>
<comment type="function">
    <text evidence="1">One of the early assembly proteins it binds 23S rRNA. One of the proteins that surrounds the polypeptide exit tunnel on the outside of the ribosome. Forms the main docking site for trigger factor binding to the ribosome.</text>
</comment>
<comment type="subunit">
    <text evidence="1">Part of the 50S ribosomal subunit. Contacts protein L29, and trigger factor when it is bound to the ribosome.</text>
</comment>
<comment type="similarity">
    <text evidence="1">Belongs to the universal ribosomal protein uL23 family.</text>
</comment>
<gene>
    <name evidence="1" type="primary">rplW</name>
    <name type="ordered locus">NT01CX_1117</name>
</gene>
<accession>A0PXU8</accession>
<dbReference type="EMBL" id="CP000382">
    <property type="protein sequence ID" value="ABK61065.1"/>
    <property type="molecule type" value="Genomic_DNA"/>
</dbReference>
<dbReference type="SMR" id="A0PXU8"/>
<dbReference type="STRING" id="386415.NT01CX_1117"/>
<dbReference type="KEGG" id="cno:NT01CX_1117"/>
<dbReference type="eggNOG" id="COG0089">
    <property type="taxonomic scope" value="Bacteria"/>
</dbReference>
<dbReference type="HOGENOM" id="CLU_037562_3_2_9"/>
<dbReference type="Proteomes" id="UP000008220">
    <property type="component" value="Chromosome"/>
</dbReference>
<dbReference type="GO" id="GO:1990904">
    <property type="term" value="C:ribonucleoprotein complex"/>
    <property type="evidence" value="ECO:0007669"/>
    <property type="project" value="UniProtKB-KW"/>
</dbReference>
<dbReference type="GO" id="GO:0005840">
    <property type="term" value="C:ribosome"/>
    <property type="evidence" value="ECO:0007669"/>
    <property type="project" value="UniProtKB-KW"/>
</dbReference>
<dbReference type="GO" id="GO:0019843">
    <property type="term" value="F:rRNA binding"/>
    <property type="evidence" value="ECO:0007669"/>
    <property type="project" value="UniProtKB-UniRule"/>
</dbReference>
<dbReference type="GO" id="GO:0003735">
    <property type="term" value="F:structural constituent of ribosome"/>
    <property type="evidence" value="ECO:0007669"/>
    <property type="project" value="InterPro"/>
</dbReference>
<dbReference type="GO" id="GO:0006412">
    <property type="term" value="P:translation"/>
    <property type="evidence" value="ECO:0007669"/>
    <property type="project" value="UniProtKB-UniRule"/>
</dbReference>
<dbReference type="FunFam" id="3.30.70.330:FF:000001">
    <property type="entry name" value="50S ribosomal protein L23"/>
    <property type="match status" value="1"/>
</dbReference>
<dbReference type="Gene3D" id="3.30.70.330">
    <property type="match status" value="1"/>
</dbReference>
<dbReference type="HAMAP" id="MF_01369_B">
    <property type="entry name" value="Ribosomal_uL23_B"/>
    <property type="match status" value="1"/>
</dbReference>
<dbReference type="InterPro" id="IPR012677">
    <property type="entry name" value="Nucleotide-bd_a/b_plait_sf"/>
</dbReference>
<dbReference type="InterPro" id="IPR013025">
    <property type="entry name" value="Ribosomal_uL23-like"/>
</dbReference>
<dbReference type="InterPro" id="IPR012678">
    <property type="entry name" value="Ribosomal_uL23/eL15/eS24_sf"/>
</dbReference>
<dbReference type="NCBIfam" id="NF004363">
    <property type="entry name" value="PRK05738.2-4"/>
    <property type="match status" value="1"/>
</dbReference>
<dbReference type="PANTHER" id="PTHR11620">
    <property type="entry name" value="60S RIBOSOMAL PROTEIN L23A"/>
    <property type="match status" value="1"/>
</dbReference>
<dbReference type="Pfam" id="PF00276">
    <property type="entry name" value="Ribosomal_L23"/>
    <property type="match status" value="1"/>
</dbReference>
<dbReference type="SUPFAM" id="SSF54189">
    <property type="entry name" value="Ribosomal proteins S24e, L23 and L15e"/>
    <property type="match status" value="1"/>
</dbReference>